<name>PNCB_SALG2</name>
<accession>B5R8M1</accession>
<feature type="chain" id="PRO_1000129485" description="Nicotinate phosphoribosyltransferase">
    <location>
        <begin position="1"/>
        <end position="400"/>
    </location>
</feature>
<feature type="modified residue" description="Phosphohistidine; by autocatalysis" evidence="1">
    <location>
        <position position="220"/>
    </location>
</feature>
<dbReference type="EC" id="6.3.4.21" evidence="1"/>
<dbReference type="EMBL" id="AM933173">
    <property type="protein sequence ID" value="CAR36836.1"/>
    <property type="molecule type" value="Genomic_DNA"/>
</dbReference>
<dbReference type="RefSeq" id="WP_000191404.1">
    <property type="nucleotide sequence ID" value="NC_011274.1"/>
</dbReference>
<dbReference type="SMR" id="B5R8M1"/>
<dbReference type="KEGG" id="seg:SG0946"/>
<dbReference type="HOGENOM" id="CLU_030991_1_0_6"/>
<dbReference type="UniPathway" id="UPA00253">
    <property type="reaction ID" value="UER00457"/>
</dbReference>
<dbReference type="Proteomes" id="UP000008321">
    <property type="component" value="Chromosome"/>
</dbReference>
<dbReference type="GO" id="GO:0005829">
    <property type="term" value="C:cytosol"/>
    <property type="evidence" value="ECO:0007669"/>
    <property type="project" value="TreeGrafter"/>
</dbReference>
<dbReference type="GO" id="GO:0004516">
    <property type="term" value="F:nicotinate phosphoribosyltransferase activity"/>
    <property type="evidence" value="ECO:0007669"/>
    <property type="project" value="UniProtKB-UniRule"/>
</dbReference>
<dbReference type="GO" id="GO:0034355">
    <property type="term" value="P:NAD biosynthetic process via the salvage pathway"/>
    <property type="evidence" value="ECO:0007669"/>
    <property type="project" value="TreeGrafter"/>
</dbReference>
<dbReference type="CDD" id="cd01401">
    <property type="entry name" value="PncB_like"/>
    <property type="match status" value="1"/>
</dbReference>
<dbReference type="FunFam" id="3.20.140.10:FF:000001">
    <property type="entry name" value="Nicotinate phosphoribosyltransferase"/>
    <property type="match status" value="1"/>
</dbReference>
<dbReference type="Gene3D" id="3.20.140.10">
    <property type="entry name" value="nicotinate phosphoribosyltransferase"/>
    <property type="match status" value="1"/>
</dbReference>
<dbReference type="HAMAP" id="MF_00570">
    <property type="entry name" value="NAPRTase"/>
    <property type="match status" value="1"/>
</dbReference>
<dbReference type="InterPro" id="IPR041525">
    <property type="entry name" value="N/Namide_PRibTrfase"/>
</dbReference>
<dbReference type="InterPro" id="IPR040727">
    <property type="entry name" value="NAPRTase_N"/>
</dbReference>
<dbReference type="InterPro" id="IPR006406">
    <property type="entry name" value="Nic_PRibTrfase"/>
</dbReference>
<dbReference type="InterPro" id="IPR007229">
    <property type="entry name" value="Nic_PRibTrfase-Fam"/>
</dbReference>
<dbReference type="InterPro" id="IPR036068">
    <property type="entry name" value="Nicotinate_pribotase-like_C"/>
</dbReference>
<dbReference type="NCBIfam" id="TIGR01514">
    <property type="entry name" value="NAPRTase"/>
    <property type="match status" value="1"/>
</dbReference>
<dbReference type="NCBIfam" id="NF003704">
    <property type="entry name" value="PRK05321.1"/>
    <property type="match status" value="1"/>
</dbReference>
<dbReference type="PANTHER" id="PTHR11098">
    <property type="entry name" value="NICOTINATE PHOSPHORIBOSYLTRANSFERASE"/>
    <property type="match status" value="1"/>
</dbReference>
<dbReference type="PANTHER" id="PTHR11098:SF1">
    <property type="entry name" value="NICOTINATE PHOSPHORIBOSYLTRANSFERASE"/>
    <property type="match status" value="1"/>
</dbReference>
<dbReference type="Pfam" id="PF04095">
    <property type="entry name" value="NAPRTase"/>
    <property type="match status" value="1"/>
</dbReference>
<dbReference type="Pfam" id="PF17767">
    <property type="entry name" value="NAPRTase_N"/>
    <property type="match status" value="1"/>
</dbReference>
<dbReference type="PIRSF" id="PIRSF000484">
    <property type="entry name" value="NAPRT"/>
    <property type="match status" value="1"/>
</dbReference>
<dbReference type="SUPFAM" id="SSF51690">
    <property type="entry name" value="Nicotinate/Quinolinate PRTase C-terminal domain-like"/>
    <property type="match status" value="1"/>
</dbReference>
<dbReference type="SUPFAM" id="SSF54675">
    <property type="entry name" value="Nicotinate/Quinolinate PRTase N-terminal domain-like"/>
    <property type="match status" value="1"/>
</dbReference>
<organism>
    <name type="scientific">Salmonella gallinarum (strain 287/91 / NCTC 13346)</name>
    <dbReference type="NCBI Taxonomy" id="550538"/>
    <lineage>
        <taxon>Bacteria</taxon>
        <taxon>Pseudomonadati</taxon>
        <taxon>Pseudomonadota</taxon>
        <taxon>Gammaproteobacteria</taxon>
        <taxon>Enterobacterales</taxon>
        <taxon>Enterobacteriaceae</taxon>
        <taxon>Salmonella</taxon>
    </lineage>
</organism>
<evidence type="ECO:0000255" key="1">
    <source>
        <dbReference type="HAMAP-Rule" id="MF_00570"/>
    </source>
</evidence>
<comment type="function">
    <text evidence="1">Catalyzes the synthesis of beta-nicotinate D-ribonucleotide from nicotinate and 5-phospho-D-ribose 1-phosphate at the expense of ATP.</text>
</comment>
<comment type="catalytic activity">
    <reaction evidence="1">
        <text>nicotinate + 5-phospho-alpha-D-ribose 1-diphosphate + ATP + H2O = nicotinate beta-D-ribonucleotide + ADP + phosphate + diphosphate</text>
        <dbReference type="Rhea" id="RHEA:36163"/>
        <dbReference type="ChEBI" id="CHEBI:15377"/>
        <dbReference type="ChEBI" id="CHEBI:30616"/>
        <dbReference type="ChEBI" id="CHEBI:32544"/>
        <dbReference type="ChEBI" id="CHEBI:33019"/>
        <dbReference type="ChEBI" id="CHEBI:43474"/>
        <dbReference type="ChEBI" id="CHEBI:57502"/>
        <dbReference type="ChEBI" id="CHEBI:58017"/>
        <dbReference type="ChEBI" id="CHEBI:456216"/>
        <dbReference type="EC" id="6.3.4.21"/>
    </reaction>
</comment>
<comment type="pathway">
    <text evidence="1">Cofactor biosynthesis; NAD(+) biosynthesis; nicotinate D-ribonucleotide from nicotinate: step 1/1.</text>
</comment>
<comment type="PTM">
    <text evidence="1">Transiently phosphorylated on a His residue during the reaction cycle. Phosphorylation strongly increases the affinity for substrates and increases the rate of nicotinate D-ribonucleotide production. Dephosphorylation regenerates the low-affinity form of the enzyme, leading to product release.</text>
</comment>
<comment type="similarity">
    <text evidence="1">Belongs to the NAPRTase family.</text>
</comment>
<keyword id="KW-0436">Ligase</keyword>
<keyword id="KW-0597">Phosphoprotein</keyword>
<keyword id="KW-0662">Pyridine nucleotide biosynthesis</keyword>
<sequence length="400" mass="45676">MTQFASPVLHSLLDTDAYKLHMQQAVFHHYYDVQVAAEFRCRGDDLLGIYADAIREQVDAMQHLRLQEDEFQWLSGLPFFKPDYLNWLREFRYNPAQVCVTNDNGKLNIRLTGPWREVIMWEVPLLAVISELVHHYRSPNAGVDQALDALESKLVDFTALTANLDMSRFHLMDFGTRRRFSREVQQAIVKRLQQESWFVGTSNYDLARRLALTPMGTQAHEWFQAHQQISPDLATSQRAALAAWLNEYPDQLGIALTDCITMDAFLRDFGIEFASRYQGLRHDSGDPVAWGEKAIAHYEKLGIDPLTKTLVFSDNLDLPKAVELYRHFASRVQLSFGIGTRLTCDIPQVKPLNIVIKLVECNGKPVAKLSDSPGKTICHDKAFVRALRKAFDLPQVRKAS</sequence>
<protein>
    <recommendedName>
        <fullName evidence="1">Nicotinate phosphoribosyltransferase</fullName>
        <shortName evidence="1">NAPRTase</shortName>
        <ecNumber evidence="1">6.3.4.21</ecNumber>
    </recommendedName>
</protein>
<gene>
    <name evidence="1" type="primary">pncB</name>
    <name type="ordered locus">SG0946</name>
</gene>
<proteinExistence type="inferred from homology"/>
<reference key="1">
    <citation type="journal article" date="2008" name="Genome Res.">
        <title>Comparative genome analysis of Salmonella enteritidis PT4 and Salmonella gallinarum 287/91 provides insights into evolutionary and host adaptation pathways.</title>
        <authorList>
            <person name="Thomson N.R."/>
            <person name="Clayton D.J."/>
            <person name="Windhorst D."/>
            <person name="Vernikos G."/>
            <person name="Davidson S."/>
            <person name="Churcher C."/>
            <person name="Quail M.A."/>
            <person name="Stevens M."/>
            <person name="Jones M.A."/>
            <person name="Watson M."/>
            <person name="Barron A."/>
            <person name="Layton A."/>
            <person name="Pickard D."/>
            <person name="Kingsley R.A."/>
            <person name="Bignell A."/>
            <person name="Clark L."/>
            <person name="Harris B."/>
            <person name="Ormond D."/>
            <person name="Abdellah Z."/>
            <person name="Brooks K."/>
            <person name="Cherevach I."/>
            <person name="Chillingworth T."/>
            <person name="Woodward J."/>
            <person name="Norberczak H."/>
            <person name="Lord A."/>
            <person name="Arrowsmith C."/>
            <person name="Jagels K."/>
            <person name="Moule S."/>
            <person name="Mungall K."/>
            <person name="Saunders M."/>
            <person name="Whitehead S."/>
            <person name="Chabalgoity J.A."/>
            <person name="Maskell D."/>
            <person name="Humphreys T."/>
            <person name="Roberts M."/>
            <person name="Barrow P.A."/>
            <person name="Dougan G."/>
            <person name="Parkhill J."/>
        </authorList>
    </citation>
    <scope>NUCLEOTIDE SEQUENCE [LARGE SCALE GENOMIC DNA]</scope>
    <source>
        <strain>287/91 / NCTC 13346</strain>
    </source>
</reference>